<reference key="1">
    <citation type="journal article" date="1994" name="Biochim. Biophys. Acta">
        <title>The gene LEO1 on yeast chromosome XV encodes a non-essential, extremely hydrophilic protein.</title>
        <authorList>
            <person name="Magdolen V."/>
            <person name="Lang P."/>
            <person name="Mages G."/>
            <person name="Hermann H."/>
            <person name="Bandlow W."/>
        </authorList>
    </citation>
    <scope>NUCLEOTIDE SEQUENCE [GENOMIC DNA]</scope>
    <source>
        <strain>ATCC 204510 / AB320</strain>
    </source>
</reference>
<reference key="2">
    <citation type="journal article" date="1996" name="Yeast">
        <title>Sequencing and analysis of 51 kb on the right arm of chromosome XV from Saccharomyces cerevisiae reveals 30 open reading frames.</title>
        <authorList>
            <person name="Wiemann S."/>
            <person name="Rechmann S."/>
            <person name="Benes V."/>
            <person name="Voss H."/>
            <person name="Schwager C."/>
            <person name="Vlcek C."/>
            <person name="Stegemann J."/>
            <person name="Zimmermann J."/>
            <person name="Erfle H."/>
            <person name="Paces V."/>
            <person name="Ansorge W."/>
        </authorList>
    </citation>
    <scope>NUCLEOTIDE SEQUENCE [GENOMIC DNA]</scope>
    <source>
        <strain>ATCC 96604 / S288c / FY1679</strain>
    </source>
</reference>
<reference key="3">
    <citation type="journal article" date="1997" name="Yeast">
        <title>DNA sequencing and analysis of 130 kb from yeast chromosome XV.</title>
        <authorList>
            <person name="Voss H."/>
            <person name="Benes V."/>
            <person name="Andrade M.A."/>
            <person name="Valencia A."/>
            <person name="Rechmann S."/>
            <person name="Teodoru C."/>
            <person name="Schwager C."/>
            <person name="Paces V."/>
            <person name="Sander C."/>
            <person name="Ansorge W."/>
        </authorList>
    </citation>
    <scope>NUCLEOTIDE SEQUENCE [GENOMIC DNA]</scope>
</reference>
<reference key="4">
    <citation type="journal article" date="1997" name="Nature">
        <title>The nucleotide sequence of Saccharomyces cerevisiae chromosome XV.</title>
        <authorList>
            <person name="Dujon B."/>
            <person name="Albermann K."/>
            <person name="Aldea M."/>
            <person name="Alexandraki D."/>
            <person name="Ansorge W."/>
            <person name="Arino J."/>
            <person name="Benes V."/>
            <person name="Bohn C."/>
            <person name="Bolotin-Fukuhara M."/>
            <person name="Bordonne R."/>
            <person name="Boyer J."/>
            <person name="Camasses A."/>
            <person name="Casamayor A."/>
            <person name="Casas C."/>
            <person name="Cheret G."/>
            <person name="Cziepluch C."/>
            <person name="Daignan-Fornier B."/>
            <person name="Dang V.-D."/>
            <person name="de Haan M."/>
            <person name="Delius H."/>
            <person name="Durand P."/>
            <person name="Fairhead C."/>
            <person name="Feldmann H."/>
            <person name="Gaillon L."/>
            <person name="Galisson F."/>
            <person name="Gamo F.-J."/>
            <person name="Gancedo C."/>
            <person name="Goffeau A."/>
            <person name="Goulding S.E."/>
            <person name="Grivell L.A."/>
            <person name="Habbig B."/>
            <person name="Hand N.J."/>
            <person name="Hani J."/>
            <person name="Hattenhorst U."/>
            <person name="Hebling U."/>
            <person name="Hernando Y."/>
            <person name="Herrero E."/>
            <person name="Heumann K."/>
            <person name="Hiesel R."/>
            <person name="Hilger F."/>
            <person name="Hofmann B."/>
            <person name="Hollenberg C.P."/>
            <person name="Hughes B."/>
            <person name="Jauniaux J.-C."/>
            <person name="Kalogeropoulos A."/>
            <person name="Katsoulou C."/>
            <person name="Kordes E."/>
            <person name="Lafuente M.J."/>
            <person name="Landt O."/>
            <person name="Louis E.J."/>
            <person name="Maarse A.C."/>
            <person name="Madania A."/>
            <person name="Mannhaupt G."/>
            <person name="Marck C."/>
            <person name="Martin R.P."/>
            <person name="Mewes H.-W."/>
            <person name="Michaux G."/>
            <person name="Paces V."/>
            <person name="Parle-McDermott A.G."/>
            <person name="Pearson B.M."/>
            <person name="Perrin A."/>
            <person name="Pettersson B."/>
            <person name="Poch O."/>
            <person name="Pohl T.M."/>
            <person name="Poirey R."/>
            <person name="Portetelle D."/>
            <person name="Pujol A."/>
            <person name="Purnelle B."/>
            <person name="Ramezani Rad M."/>
            <person name="Rechmann S."/>
            <person name="Schwager C."/>
            <person name="Schweizer M."/>
            <person name="Sor F."/>
            <person name="Sterky F."/>
            <person name="Tarassov I.A."/>
            <person name="Teodoru C."/>
            <person name="Tettelin H."/>
            <person name="Thierry A."/>
            <person name="Tobiasch E."/>
            <person name="Tzermia M."/>
            <person name="Uhlen M."/>
            <person name="Unseld M."/>
            <person name="Valens M."/>
            <person name="Vandenbol M."/>
            <person name="Vetter I."/>
            <person name="Vlcek C."/>
            <person name="Voet M."/>
            <person name="Volckaert G."/>
            <person name="Voss H."/>
            <person name="Wambutt R."/>
            <person name="Wedler H."/>
            <person name="Wiemann S."/>
            <person name="Winsor B."/>
            <person name="Wolfe K.H."/>
            <person name="Zollner A."/>
            <person name="Zumstein E."/>
            <person name="Kleine K."/>
        </authorList>
    </citation>
    <scope>NUCLEOTIDE SEQUENCE [LARGE SCALE GENOMIC DNA]</scope>
    <source>
        <strain>ATCC 204508 / S288c</strain>
    </source>
</reference>
<reference key="5">
    <citation type="journal article" date="2014" name="G3 (Bethesda)">
        <title>The reference genome sequence of Saccharomyces cerevisiae: Then and now.</title>
        <authorList>
            <person name="Engel S.R."/>
            <person name="Dietrich F.S."/>
            <person name="Fisk D.G."/>
            <person name="Binkley G."/>
            <person name="Balakrishnan R."/>
            <person name="Costanzo M.C."/>
            <person name="Dwight S.S."/>
            <person name="Hitz B.C."/>
            <person name="Karra K."/>
            <person name="Nash R.S."/>
            <person name="Weng S."/>
            <person name="Wong E.D."/>
            <person name="Lloyd P."/>
            <person name="Skrzypek M.S."/>
            <person name="Miyasato S.R."/>
            <person name="Simison M."/>
            <person name="Cherry J.M."/>
        </authorList>
    </citation>
    <scope>GENOME REANNOTATION</scope>
    <source>
        <strain>ATCC 204508 / S288c</strain>
    </source>
</reference>
<reference key="6">
    <citation type="journal article" date="1992" name="J. Biol. Chem.">
        <title>Ubiquitin-specific proteases of Saccharomyces cerevisiae. Cloning of UBP2 and UBP3, and functional analysis of the UBP gene family.</title>
        <authorList>
            <person name="Baker R.T."/>
            <person name="Tobias J.W."/>
            <person name="Varshavsky A."/>
        </authorList>
    </citation>
    <scope>NUCLEOTIDE SEQUENCE [GENOMIC DNA] OF 1-326</scope>
</reference>
<reference key="7">
    <citation type="journal article" date="2002" name="Mol. Cell. Biol.">
        <title>Ctr9, Rtf1, and Leo1 are components of the Paf1/RNA polymerase II complex.</title>
        <authorList>
            <person name="Mueller C.L."/>
            <person name="Jaehning J.A."/>
        </authorList>
    </citation>
    <scope>IDENTIFICATION IN THE PAF1 COMPLEX</scope>
</reference>
<reference key="8">
    <citation type="journal article" date="2003" name="Nature">
        <title>Global analysis of protein expression in yeast.</title>
        <authorList>
            <person name="Ghaemmaghami S."/>
            <person name="Huh W.-K."/>
            <person name="Bower K."/>
            <person name="Howson R.W."/>
            <person name="Belle A."/>
            <person name="Dephoure N."/>
            <person name="O'Shea E.K."/>
            <person name="Weissman J.S."/>
        </authorList>
    </citation>
    <scope>LEVEL OF PROTEIN EXPRESSION [LARGE SCALE ANALYSIS]</scope>
</reference>
<reference key="9">
    <citation type="journal article" date="2005" name="Eukaryot. Cell">
        <title>Separation of the Saccharomyces cerevisiae Paf1 complex from RNA polymerase II results in changes in its subnuclear localization.</title>
        <authorList>
            <person name="Porter S.E."/>
            <person name="Penheiter K.L."/>
            <person name="Jaehning J.A."/>
        </authorList>
    </citation>
    <scope>FUNCTION</scope>
    <scope>SUBCELLULAR LOCATION</scope>
</reference>
<reference key="10">
    <citation type="journal article" date="2005" name="Mol. Cell">
        <title>A requirement for the Saccharomyces cerevisiae Paf1 complex in snoRNA 3' end formation.</title>
        <authorList>
            <person name="Sheldon K.E."/>
            <person name="Mauger D.M."/>
            <person name="Arndt K.M."/>
        </authorList>
    </citation>
    <scope>FUNCTION</scope>
</reference>
<reference key="11">
    <citation type="journal article" date="2007" name="J. Proteome Res.">
        <title>Large-scale phosphorylation analysis of alpha-factor-arrested Saccharomyces cerevisiae.</title>
        <authorList>
            <person name="Li X."/>
            <person name="Gerber S.A."/>
            <person name="Rudner A.D."/>
            <person name="Beausoleil S.A."/>
            <person name="Haas W."/>
            <person name="Villen J."/>
            <person name="Elias J.E."/>
            <person name="Gygi S.P."/>
        </authorList>
    </citation>
    <scope>PHOSPHORYLATION [LARGE SCALE ANALYSIS] AT SER-105; SER-132 AND SER-358</scope>
    <scope>IDENTIFICATION BY MASS SPECTROMETRY [LARGE SCALE ANALYSIS]</scope>
    <source>
        <strain>ADR376</strain>
    </source>
</reference>
<reference key="12">
    <citation type="journal article" date="2008" name="Mol. Cell. Proteomics">
        <title>A multidimensional chromatography technology for in-depth phosphoproteome analysis.</title>
        <authorList>
            <person name="Albuquerque C.P."/>
            <person name="Smolka M.B."/>
            <person name="Payne S.H."/>
            <person name="Bafna V."/>
            <person name="Eng J."/>
            <person name="Zhou H."/>
        </authorList>
    </citation>
    <scope>PHOSPHORYLATION [LARGE SCALE ANALYSIS] AT SER-105; SER-132; SER-188 AND SER-358</scope>
    <scope>IDENTIFICATION BY MASS SPECTROMETRY [LARGE SCALE ANALYSIS]</scope>
</reference>
<reference key="13">
    <citation type="journal article" date="2009" name="Science">
        <title>Global analysis of Cdk1 substrate phosphorylation sites provides insights into evolution.</title>
        <authorList>
            <person name="Holt L.J."/>
            <person name="Tuch B.B."/>
            <person name="Villen J."/>
            <person name="Johnson A.D."/>
            <person name="Gygi S.P."/>
            <person name="Morgan D.O."/>
        </authorList>
    </citation>
    <scope>PHOSPHORYLATION [LARGE SCALE ANALYSIS] AT SER-105; SER-132; SER-358 AND SER-372</scope>
    <scope>IDENTIFICATION BY MASS SPECTROMETRY [LARGE SCALE ANALYSIS]</scope>
</reference>
<accession>P38439</accession>
<accession>D6W2I1</accession>
<proteinExistence type="evidence at protein level"/>
<organism>
    <name type="scientific">Saccharomyces cerevisiae (strain ATCC 204508 / S288c)</name>
    <name type="common">Baker's yeast</name>
    <dbReference type="NCBI Taxonomy" id="559292"/>
    <lineage>
        <taxon>Eukaryota</taxon>
        <taxon>Fungi</taxon>
        <taxon>Dikarya</taxon>
        <taxon>Ascomycota</taxon>
        <taxon>Saccharomycotina</taxon>
        <taxon>Saccharomycetes</taxon>
        <taxon>Saccharomycetales</taxon>
        <taxon>Saccharomycetaceae</taxon>
        <taxon>Saccharomyces</taxon>
    </lineage>
</organism>
<feature type="chain" id="PRO_0000084406" description="RNA polymerase-associated protein LEO1">
    <location>
        <begin position="1"/>
        <end position="464"/>
    </location>
</feature>
<feature type="region of interest" description="Disordered" evidence="1">
    <location>
        <begin position="1"/>
        <end position="111"/>
    </location>
</feature>
<feature type="region of interest" description="Disordered" evidence="1">
    <location>
        <begin position="344"/>
        <end position="464"/>
    </location>
</feature>
<feature type="compositionally biased region" description="Polar residues" evidence="1">
    <location>
        <begin position="1"/>
        <end position="15"/>
    </location>
</feature>
<feature type="compositionally biased region" description="Low complexity" evidence="1">
    <location>
        <begin position="16"/>
        <end position="29"/>
    </location>
</feature>
<feature type="compositionally biased region" description="Basic and acidic residues" evidence="1">
    <location>
        <begin position="30"/>
        <end position="40"/>
    </location>
</feature>
<feature type="compositionally biased region" description="Acidic residues" evidence="1">
    <location>
        <begin position="48"/>
        <end position="73"/>
    </location>
</feature>
<feature type="compositionally biased region" description="Basic and acidic residues" evidence="1">
    <location>
        <begin position="74"/>
        <end position="85"/>
    </location>
</feature>
<feature type="compositionally biased region" description="Polar residues" evidence="1">
    <location>
        <begin position="368"/>
        <end position="377"/>
    </location>
</feature>
<feature type="compositionally biased region" description="Acidic residues" evidence="1">
    <location>
        <begin position="384"/>
        <end position="420"/>
    </location>
</feature>
<feature type="modified residue" description="Phosphoserine" evidence="7 8 9">
    <location>
        <position position="105"/>
    </location>
</feature>
<feature type="modified residue" description="Phosphoserine" evidence="7 8 9">
    <location>
        <position position="132"/>
    </location>
</feature>
<feature type="modified residue" description="Phosphoserine" evidence="8">
    <location>
        <position position="188"/>
    </location>
</feature>
<feature type="modified residue" description="Phosphoserine" evidence="7 8 9">
    <location>
        <position position="358"/>
    </location>
</feature>
<feature type="modified residue" description="Phosphoserine" evidence="9">
    <location>
        <position position="372"/>
    </location>
</feature>
<feature type="sequence conflict" description="In Ref. 6; M94916." evidence="6" ref="6">
    <original>Q</original>
    <variation>L</variation>
    <location>
        <position position="134"/>
    </location>
</feature>
<feature type="sequence conflict" description="In Ref. 6; M94916." evidence="6" ref="6">
    <original>T</original>
    <variation>N</variation>
    <location>
        <position position="320"/>
    </location>
</feature>
<gene>
    <name type="primary">LEO1</name>
    <name type="ordered locus">YOR123C</name>
    <name type="ORF">O3278</name>
    <name type="ORF">YOR3278C</name>
</gene>
<keyword id="KW-0010">Activator</keyword>
<keyword id="KW-0539">Nucleus</keyword>
<keyword id="KW-0597">Phosphoprotein</keyword>
<keyword id="KW-1185">Reference proteome</keyword>
<keyword id="KW-0804">Transcription</keyword>
<keyword id="KW-0805">Transcription regulation</keyword>
<comment type="function">
    <text evidence="4 5">The PAF1 complex is a multifunctional complex. Involved in transcription initiation via genetic interactions with TATA-binding proteins. Involved in elongation. It regulates 3'-end formation of snR47 by modulating the recruitment or stable association of NRD1 and NAB3 with RNA polymerase II. Also has a role in transcription-coupled histone modification. Required for activation of RAD6 ubiquitin conjugate and the BRE1 ubiquitin ligase which ubiquitinate 'Lys-126' histone H2B. Activates the SET1 histone methyltransferase complex for methylation of 'Lys-4' of histone H3 and for methylation of 'Lys-73' of histone H3 by DOT1 and 'Lys-36' of histone H3 by SET2.</text>
</comment>
<comment type="subunit">
    <text evidence="2">Component of the PAF1 complex which consists of at least CDC73, CTR9, LEO1, PAF1 and RTF1.</text>
</comment>
<comment type="interaction">
    <interactant intactId="EBI-10108">
        <id>P38439</id>
    </interactant>
    <interactant intactId="EBI-5283">
        <id>P89105</id>
        <label>CTR9</label>
    </interactant>
    <organismsDiffer>false</organismsDiffer>
    <experiments>6</experiments>
</comment>
<comment type="interaction">
    <interactant intactId="EBI-10108">
        <id>P38439</id>
    </interactant>
    <interactant intactId="EBI-12855">
        <id>P38351</id>
        <label>PAF1</label>
    </interactant>
    <organismsDiffer>false</organismsDiffer>
    <experiments>6</experiments>
</comment>
<comment type="interaction">
    <interactant intactId="EBI-10108">
        <id>P38439</id>
    </interactant>
    <interactant intactId="EBI-16303">
        <id>P53064</id>
        <label>RTF1</label>
    </interactant>
    <organismsDiffer>false</organismsDiffer>
    <experiments>6</experiments>
</comment>
<comment type="interaction">
    <interactant intactId="EBI-10108">
        <id>P38439</id>
    </interactant>
    <interactant intactId="EBI-17372">
        <id>Q00772</id>
        <label>SLT2</label>
    </interactant>
    <organismsDiffer>false</organismsDiffer>
    <experiments>2</experiments>
</comment>
<comment type="subcellular location">
    <subcellularLocation>
        <location evidence="4">Nucleus</location>
        <location evidence="4">Nucleoplasm</location>
    </subcellularLocation>
</comment>
<comment type="miscellaneous">
    <text evidence="3">Present with 1110 molecules/cell in log phase SD medium.</text>
</comment>
<comment type="similarity">
    <text evidence="6">Belongs to the LEO1 family.</text>
</comment>
<evidence type="ECO:0000256" key="1">
    <source>
        <dbReference type="SAM" id="MobiDB-lite"/>
    </source>
</evidence>
<evidence type="ECO:0000269" key="2">
    <source>
    </source>
</evidence>
<evidence type="ECO:0000269" key="3">
    <source>
    </source>
</evidence>
<evidence type="ECO:0000269" key="4">
    <source>
    </source>
</evidence>
<evidence type="ECO:0000269" key="5">
    <source>
    </source>
</evidence>
<evidence type="ECO:0000305" key="6"/>
<evidence type="ECO:0007744" key="7">
    <source>
    </source>
</evidence>
<evidence type="ECO:0007744" key="8">
    <source>
    </source>
</evidence>
<evidence type="ECO:0007744" key="9">
    <source>
    </source>
</evidence>
<dbReference type="EMBL" id="X77135">
    <property type="protein sequence ID" value="CAA54391.1"/>
    <property type="molecule type" value="Genomic_DNA"/>
</dbReference>
<dbReference type="EMBL" id="X90518">
    <property type="protein sequence ID" value="CAA62122.1"/>
    <property type="molecule type" value="Genomic_DNA"/>
</dbReference>
<dbReference type="EMBL" id="X94335">
    <property type="protein sequence ID" value="CAA64042.1"/>
    <property type="molecule type" value="Genomic_DNA"/>
</dbReference>
<dbReference type="EMBL" id="Z75031">
    <property type="protein sequence ID" value="CAA99322.1"/>
    <property type="molecule type" value="Genomic_DNA"/>
</dbReference>
<dbReference type="EMBL" id="M94916">
    <property type="status" value="NOT_ANNOTATED_CDS"/>
    <property type="molecule type" value="Genomic_DNA"/>
</dbReference>
<dbReference type="EMBL" id="BK006948">
    <property type="protein sequence ID" value="DAA10897.1"/>
    <property type="molecule type" value="Genomic_DNA"/>
</dbReference>
<dbReference type="PIR" id="S45363">
    <property type="entry name" value="S45363"/>
</dbReference>
<dbReference type="RefSeq" id="NP_014766.1">
    <property type="nucleotide sequence ID" value="NM_001183542.1"/>
</dbReference>
<dbReference type="SMR" id="P38439"/>
<dbReference type="BioGRID" id="34518">
    <property type="interactions" value="497"/>
</dbReference>
<dbReference type="ComplexPortal" id="CPX-1726">
    <property type="entry name" value="PAF1 complex"/>
</dbReference>
<dbReference type="DIP" id="DIP-4143N"/>
<dbReference type="FunCoup" id="P38439">
    <property type="interactions" value="193"/>
</dbReference>
<dbReference type="IntAct" id="P38439">
    <property type="interactions" value="12"/>
</dbReference>
<dbReference type="MINT" id="P38439"/>
<dbReference type="STRING" id="4932.YOR123C"/>
<dbReference type="iPTMnet" id="P38439"/>
<dbReference type="PaxDb" id="4932-YOR123C"/>
<dbReference type="PeptideAtlas" id="P38439"/>
<dbReference type="EnsemblFungi" id="YOR123C_mRNA">
    <property type="protein sequence ID" value="YOR123C"/>
    <property type="gene ID" value="YOR123C"/>
</dbReference>
<dbReference type="GeneID" id="854290"/>
<dbReference type="KEGG" id="sce:YOR123C"/>
<dbReference type="AGR" id="SGD:S000005649"/>
<dbReference type="SGD" id="S000005649">
    <property type="gene designation" value="LEO1"/>
</dbReference>
<dbReference type="VEuPathDB" id="FungiDB:YOR123C"/>
<dbReference type="eggNOG" id="KOG2428">
    <property type="taxonomic scope" value="Eukaryota"/>
</dbReference>
<dbReference type="GeneTree" id="ENSGT00550000074952"/>
<dbReference type="HOGENOM" id="CLU_052846_0_0_1"/>
<dbReference type="InParanoid" id="P38439"/>
<dbReference type="OMA" id="RSDRSMH"/>
<dbReference type="OrthoDB" id="20844at2759"/>
<dbReference type="BioCyc" id="YEAST:G3O-33650-MONOMER"/>
<dbReference type="BioGRID-ORCS" id="854290">
    <property type="hits" value="6 hits in 10 CRISPR screens"/>
</dbReference>
<dbReference type="PRO" id="PR:P38439"/>
<dbReference type="Proteomes" id="UP000002311">
    <property type="component" value="Chromosome XV"/>
</dbReference>
<dbReference type="RNAct" id="P38439">
    <property type="molecule type" value="protein"/>
</dbReference>
<dbReference type="GO" id="GO:0016593">
    <property type="term" value="C:Cdc73/Paf1 complex"/>
    <property type="evidence" value="ECO:0000353"/>
    <property type="project" value="SGD"/>
</dbReference>
<dbReference type="GO" id="GO:0005634">
    <property type="term" value="C:nucleus"/>
    <property type="evidence" value="ECO:0000314"/>
    <property type="project" value="SGD"/>
</dbReference>
<dbReference type="GO" id="GO:0003723">
    <property type="term" value="F:RNA binding"/>
    <property type="evidence" value="ECO:0000314"/>
    <property type="project" value="SGD"/>
</dbReference>
<dbReference type="GO" id="GO:1990269">
    <property type="term" value="F:RNA polymerase II C-terminal domain phosphoserine binding"/>
    <property type="evidence" value="ECO:0000314"/>
    <property type="project" value="SGD"/>
</dbReference>
<dbReference type="GO" id="GO:0061629">
    <property type="term" value="F:RNA polymerase II-specific DNA-binding transcription factor binding"/>
    <property type="evidence" value="ECO:0000353"/>
    <property type="project" value="SGD"/>
</dbReference>
<dbReference type="GO" id="GO:0003712">
    <property type="term" value="F:transcription coregulator activity"/>
    <property type="evidence" value="ECO:0000353"/>
    <property type="project" value="SGD"/>
</dbReference>
<dbReference type="GO" id="GO:0006325">
    <property type="term" value="P:chromatin organization"/>
    <property type="evidence" value="ECO:0000315"/>
    <property type="project" value="SGD"/>
</dbReference>
<dbReference type="GO" id="GO:0006353">
    <property type="term" value="P:DNA-templated transcription termination"/>
    <property type="evidence" value="ECO:0000315"/>
    <property type="project" value="SGD"/>
</dbReference>
<dbReference type="GO" id="GO:2001209">
    <property type="term" value="P:positive regulation of transcription elongation by RNA polymerase I"/>
    <property type="evidence" value="ECO:0000314"/>
    <property type="project" value="SGD"/>
</dbReference>
<dbReference type="GO" id="GO:0032968">
    <property type="term" value="P:positive regulation of transcription elongation by RNA polymerase II"/>
    <property type="evidence" value="ECO:0000315"/>
    <property type="project" value="SGD"/>
</dbReference>
<dbReference type="GO" id="GO:0090262">
    <property type="term" value="P:regulation of transcription-coupled nucleotide-excision repair"/>
    <property type="evidence" value="ECO:0000316"/>
    <property type="project" value="SGD"/>
</dbReference>
<dbReference type="GO" id="GO:0009302">
    <property type="term" value="P:sno(s)RNA transcription"/>
    <property type="evidence" value="ECO:0000315"/>
    <property type="project" value="SGD"/>
</dbReference>
<dbReference type="GO" id="GO:0006368">
    <property type="term" value="P:transcription elongation by RNA polymerase II"/>
    <property type="evidence" value="ECO:0000316"/>
    <property type="project" value="SGD"/>
</dbReference>
<dbReference type="InterPro" id="IPR007149">
    <property type="entry name" value="Leo1"/>
</dbReference>
<dbReference type="PANTHER" id="PTHR23146">
    <property type="entry name" value="LEO1 PROTEIN"/>
    <property type="match status" value="1"/>
</dbReference>
<dbReference type="PANTHER" id="PTHR23146:SF0">
    <property type="entry name" value="RNA POLYMERASE-ASSOCIATED PROTEIN LEO1"/>
    <property type="match status" value="1"/>
</dbReference>
<dbReference type="Pfam" id="PF04004">
    <property type="entry name" value="Leo1"/>
    <property type="match status" value="1"/>
</dbReference>
<name>LEO1_YEAST</name>
<protein>
    <recommendedName>
        <fullName>RNA polymerase-associated protein LEO1</fullName>
    </recommendedName>
</protein>
<sequence>MSSESPQDQPQKEQISNNVGVTTNSTSNEETSRSQDDNVKEVNGNDDTKEEEQEEDAELDDLFGDDNDDDDDDDVKKSETEKSDSDSDEDDEGENINHRSRHRESLGLDDDEAEEQAMYTRKFYGEDANNFSDQDETTHTFKEENVELVRHIIPSKANVNETASHNEIFYARIPNFLTIDPIPFDPPSFEAKVNERASNSASREDQLDDRLIDENTVRWRYSRDKDQHVFKESNTQIVQWSDGTYSLKVGEECTDILVNDTSNTFLTVSHDQQELIQCYEGGEIKKTLMFIPTSTNSKIHQKLSKAVIRRNQRQSKGPGTYIVSMDPEVEKKELERKQSQILRDRRRRQLKEKEKQESPDAAFETGFRKQNSPTTYGASRRNEYEEDDFLVDDDEEEEAAFDDEEDDNEEEEEEEDADEENASRLRNLKREGAAMYREEEEEEKDRSETKRRRVAVIEDDEDED</sequence>